<name>RT10_ARATH</name>
<evidence type="ECO:0000255" key="1"/>
<evidence type="ECO:0000303" key="2">
    <source>
    </source>
</evidence>
<evidence type="ECO:0000305" key="3"/>
<reference key="1">
    <citation type="journal article" date="1995" name="FEBS Lett.">
        <title>Transfer of rps10 from the mitochondrion to the nucleus in Arabidopsis thaliana: evidence for RNA-mediated transfer and exon shuffling at the integration site.</title>
        <authorList>
            <person name="Wischmann C."/>
            <person name="Schuster W."/>
        </authorList>
    </citation>
    <scope>NUCLEOTIDE SEQUENCE [MRNA]</scope>
    <source>
        <strain>cv. C24</strain>
    </source>
</reference>
<reference key="2">
    <citation type="journal article" date="2000" name="DNA Res.">
        <title>Structural analysis of Arabidopsis thaliana chromosome 3. I. Sequence features of the regions of 4,504,864 bp covered by sixty P1 and TAC clones.</title>
        <authorList>
            <person name="Sato S."/>
            <person name="Nakamura Y."/>
            <person name="Kaneko T."/>
            <person name="Katoh T."/>
            <person name="Asamizu E."/>
            <person name="Tabata S."/>
        </authorList>
    </citation>
    <scope>NUCLEOTIDE SEQUENCE [LARGE SCALE GENOMIC DNA]</scope>
    <source>
        <strain>cv. Columbia</strain>
    </source>
</reference>
<reference key="3">
    <citation type="journal article" date="2017" name="Plant J.">
        <title>Araport11: a complete reannotation of the Arabidopsis thaliana reference genome.</title>
        <authorList>
            <person name="Cheng C.Y."/>
            <person name="Krishnakumar V."/>
            <person name="Chan A.P."/>
            <person name="Thibaud-Nissen F."/>
            <person name="Schobel S."/>
            <person name="Town C.D."/>
        </authorList>
    </citation>
    <scope>GENOME REANNOTATION</scope>
    <source>
        <strain>cv. Columbia</strain>
    </source>
</reference>
<reference key="4">
    <citation type="journal article" date="2003" name="Science">
        <title>Empirical analysis of transcriptional activity in the Arabidopsis genome.</title>
        <authorList>
            <person name="Yamada K."/>
            <person name="Lim J."/>
            <person name="Dale J.M."/>
            <person name="Chen H."/>
            <person name="Shinn P."/>
            <person name="Palm C.J."/>
            <person name="Southwick A.M."/>
            <person name="Wu H.C."/>
            <person name="Kim C.J."/>
            <person name="Nguyen M."/>
            <person name="Pham P.K."/>
            <person name="Cheuk R.F."/>
            <person name="Karlin-Newmann G."/>
            <person name="Liu S.X."/>
            <person name="Lam B."/>
            <person name="Sakano H."/>
            <person name="Wu T."/>
            <person name="Yu G."/>
            <person name="Miranda M."/>
            <person name="Quach H.L."/>
            <person name="Tripp M."/>
            <person name="Chang C.H."/>
            <person name="Lee J.M."/>
            <person name="Toriumi M.J."/>
            <person name="Chan M.M."/>
            <person name="Tang C.C."/>
            <person name="Onodera C.S."/>
            <person name="Deng J.M."/>
            <person name="Akiyama K."/>
            <person name="Ansari Y."/>
            <person name="Arakawa T."/>
            <person name="Banh J."/>
            <person name="Banno F."/>
            <person name="Bowser L."/>
            <person name="Brooks S.Y."/>
            <person name="Carninci P."/>
            <person name="Chao Q."/>
            <person name="Choy N."/>
            <person name="Enju A."/>
            <person name="Goldsmith A.D."/>
            <person name="Gurjal M."/>
            <person name="Hansen N.F."/>
            <person name="Hayashizaki Y."/>
            <person name="Johnson-Hopson C."/>
            <person name="Hsuan V.W."/>
            <person name="Iida K."/>
            <person name="Karnes M."/>
            <person name="Khan S."/>
            <person name="Koesema E."/>
            <person name="Ishida J."/>
            <person name="Jiang P.X."/>
            <person name="Jones T."/>
            <person name="Kawai J."/>
            <person name="Kamiya A."/>
            <person name="Meyers C."/>
            <person name="Nakajima M."/>
            <person name="Narusaka M."/>
            <person name="Seki M."/>
            <person name="Sakurai T."/>
            <person name="Satou M."/>
            <person name="Tamse R."/>
            <person name="Vaysberg M."/>
            <person name="Wallender E.K."/>
            <person name="Wong C."/>
            <person name="Yamamura Y."/>
            <person name="Yuan S."/>
            <person name="Shinozaki K."/>
            <person name="Davis R.W."/>
            <person name="Theologis A."/>
            <person name="Ecker J.R."/>
        </authorList>
    </citation>
    <scope>NUCLEOTIDE SEQUENCE [LARGE SCALE MRNA]</scope>
    <source>
        <strain>cv. Columbia</strain>
    </source>
</reference>
<reference key="5">
    <citation type="journal article" date="2023" name="Plant Cell">
        <title>An updated nomenclature for plant ribosomal protein genes.</title>
        <authorList>
            <person name="Scarpin M.R."/>
            <person name="Busche M."/>
            <person name="Martinez R.E."/>
            <person name="Harper L.C."/>
            <person name="Reiser L."/>
            <person name="Szakonyi D."/>
            <person name="Merchante C."/>
            <person name="Lan T."/>
            <person name="Xiong W."/>
            <person name="Mo B."/>
            <person name="Tang G."/>
            <person name="Chen X."/>
            <person name="Bailey-Serres J."/>
            <person name="Browning K.S."/>
            <person name="Brunkard J.O."/>
        </authorList>
    </citation>
    <scope>NOMENCLATURE</scope>
</reference>
<keyword id="KW-0002">3D-structure</keyword>
<keyword id="KW-0496">Mitochondrion</keyword>
<keyword id="KW-1185">Reference proteome</keyword>
<keyword id="KW-0687">Ribonucleoprotein</keyword>
<keyword id="KW-0689">Ribosomal protein</keyword>
<keyword id="KW-0809">Transit peptide</keyword>
<organism>
    <name type="scientific">Arabidopsis thaliana</name>
    <name type="common">Mouse-ear cress</name>
    <dbReference type="NCBI Taxonomy" id="3702"/>
    <lineage>
        <taxon>Eukaryota</taxon>
        <taxon>Viridiplantae</taxon>
        <taxon>Streptophyta</taxon>
        <taxon>Embryophyta</taxon>
        <taxon>Tracheophyta</taxon>
        <taxon>Spermatophyta</taxon>
        <taxon>Magnoliopsida</taxon>
        <taxon>eudicotyledons</taxon>
        <taxon>Gunneridae</taxon>
        <taxon>Pentapetalae</taxon>
        <taxon>rosids</taxon>
        <taxon>malvids</taxon>
        <taxon>Brassicales</taxon>
        <taxon>Brassicaceae</taxon>
        <taxon>Camelineae</taxon>
        <taxon>Arabidopsis</taxon>
    </lineage>
</organism>
<feature type="transit peptide" description="Mitochondrion" evidence="1">
    <location>
        <begin position="1"/>
        <end position="54"/>
    </location>
</feature>
<feature type="chain" id="PRO_0000030601" description="Small ribosomal subunit protein uS10m">
    <location>
        <begin position="55"/>
        <end position="241"/>
    </location>
</feature>
<feature type="sequence conflict" description="In Ref. 1; CAA56711." evidence="3" ref="1">
    <original>R</original>
    <variation>P</variation>
    <location>
        <position position="7"/>
    </location>
</feature>
<sequence>MIAGVLRRSSLPSRQTLSAALASFNSCISHNLTPATTGASVSSRFTLASSPNSFGIRARNIHIRSEPSMIVPAGIASQGYATVTKDRKNEIKKAKIKISPDNVRPLSRKEIALQKEAAEESTSKIKGTKICIAIRSFVNPEKQAWCLPPHTRKVAMPDTRTLYTVLRSPHVDKKSREQFEMRFKKRFLVIKAQSHELSKKLFWLKRYRILGAQYELQFHCKTRLDMTQVLGNINGSTTNAY</sequence>
<gene>
    <name type="primary">RPS10</name>
    <name type="ordered locus">At3g22300</name>
    <name type="ORF">MCB17.2</name>
</gene>
<accession>P42797</accession>
<accession>Q9LUW7</accession>
<comment type="subunit">
    <text evidence="3">Component of the mitochondrial ribosome small subunit.</text>
</comment>
<comment type="subcellular location">
    <subcellularLocation>
        <location evidence="2">Mitochondrion</location>
    </subcellularLocation>
</comment>
<comment type="similarity">
    <text evidence="3">Belongs to the universal ribosomal protein uS10 family.</text>
</comment>
<dbReference type="EMBL" id="X80694">
    <property type="protein sequence ID" value="CAA56711.1"/>
    <property type="molecule type" value="mRNA"/>
</dbReference>
<dbReference type="EMBL" id="AB022215">
    <property type="protein sequence ID" value="BAB01767.1"/>
    <property type="molecule type" value="Genomic_DNA"/>
</dbReference>
<dbReference type="EMBL" id="CP002686">
    <property type="protein sequence ID" value="AEE76619.1"/>
    <property type="molecule type" value="Genomic_DNA"/>
</dbReference>
<dbReference type="EMBL" id="AF370548">
    <property type="protein sequence ID" value="AAK48975.1"/>
    <property type="molecule type" value="mRNA"/>
</dbReference>
<dbReference type="EMBL" id="BT006286">
    <property type="protein sequence ID" value="AAP13394.1"/>
    <property type="molecule type" value="mRNA"/>
</dbReference>
<dbReference type="PIR" id="S66361">
    <property type="entry name" value="S66361"/>
</dbReference>
<dbReference type="RefSeq" id="NP_188869.1">
    <property type="nucleotide sequence ID" value="NM_113128.3"/>
</dbReference>
<dbReference type="PDB" id="6XYW">
    <property type="method" value="EM"/>
    <property type="resolution" value="3.86 A"/>
    <property type="chains" value="Bi=1-241"/>
</dbReference>
<dbReference type="PDBsum" id="6XYW"/>
<dbReference type="EMDB" id="EMD-10654"/>
<dbReference type="SMR" id="P42797"/>
<dbReference type="FunCoup" id="P42797">
    <property type="interactions" value="130"/>
</dbReference>
<dbReference type="IntAct" id="P42797">
    <property type="interactions" value="1"/>
</dbReference>
<dbReference type="STRING" id="3702.P42797"/>
<dbReference type="PaxDb" id="3702-AT3G22300.1"/>
<dbReference type="ProteomicsDB" id="228063"/>
<dbReference type="EnsemblPlants" id="AT3G22300.1">
    <property type="protein sequence ID" value="AT3G22300.1"/>
    <property type="gene ID" value="AT3G22300"/>
</dbReference>
<dbReference type="GeneID" id="821799"/>
<dbReference type="Gramene" id="AT3G22300.1">
    <property type="protein sequence ID" value="AT3G22300.1"/>
    <property type="gene ID" value="AT3G22300"/>
</dbReference>
<dbReference type="KEGG" id="ath:AT3G22300"/>
<dbReference type="Araport" id="AT3G22300"/>
<dbReference type="TAIR" id="AT3G22300">
    <property type="gene designation" value="RPS10"/>
</dbReference>
<dbReference type="eggNOG" id="ENOG502S5UJ">
    <property type="taxonomic scope" value="Eukaryota"/>
</dbReference>
<dbReference type="HOGENOM" id="CLU_1153085_0_0_1"/>
<dbReference type="InParanoid" id="P42797"/>
<dbReference type="OMA" id="QAWCLPP"/>
<dbReference type="OrthoDB" id="366214at2759"/>
<dbReference type="PRO" id="PR:P42797"/>
<dbReference type="Proteomes" id="UP000006548">
    <property type="component" value="Chromosome 3"/>
</dbReference>
<dbReference type="ExpressionAtlas" id="P42797">
    <property type="expression patterns" value="baseline and differential"/>
</dbReference>
<dbReference type="GO" id="GO:0005763">
    <property type="term" value="C:mitochondrial small ribosomal subunit"/>
    <property type="evidence" value="ECO:0000250"/>
    <property type="project" value="TAIR"/>
</dbReference>
<dbReference type="GO" id="GO:0005739">
    <property type="term" value="C:mitochondrion"/>
    <property type="evidence" value="ECO:0000314"/>
    <property type="project" value="TAIR"/>
</dbReference>
<dbReference type="GO" id="GO:0003729">
    <property type="term" value="F:mRNA binding"/>
    <property type="evidence" value="ECO:0000314"/>
    <property type="project" value="TAIR"/>
</dbReference>
<dbReference type="GO" id="GO:0003735">
    <property type="term" value="F:structural constituent of ribosome"/>
    <property type="evidence" value="ECO:0000250"/>
    <property type="project" value="TAIR"/>
</dbReference>
<dbReference type="GO" id="GO:0006412">
    <property type="term" value="P:translation"/>
    <property type="evidence" value="ECO:0000250"/>
    <property type="project" value="TAIR"/>
</dbReference>
<dbReference type="Gene3D" id="3.30.70.600">
    <property type="entry name" value="Ribosomal protein S10 domain"/>
    <property type="match status" value="1"/>
</dbReference>
<dbReference type="InterPro" id="IPR001848">
    <property type="entry name" value="Ribosomal_uS10"/>
</dbReference>
<dbReference type="InterPro" id="IPR027486">
    <property type="entry name" value="Ribosomal_uS10_dom"/>
</dbReference>
<dbReference type="InterPro" id="IPR036838">
    <property type="entry name" value="Ribosomal_uS10_dom_sf"/>
</dbReference>
<dbReference type="PANTHER" id="PTHR11700">
    <property type="entry name" value="30S RIBOSOMAL PROTEIN S10 FAMILY MEMBER"/>
    <property type="match status" value="1"/>
</dbReference>
<dbReference type="Pfam" id="PF00338">
    <property type="entry name" value="Ribosomal_S10"/>
    <property type="match status" value="1"/>
</dbReference>
<dbReference type="PRINTS" id="PR00971">
    <property type="entry name" value="RIBOSOMALS10"/>
</dbReference>
<dbReference type="SMART" id="SM01403">
    <property type="entry name" value="Ribosomal_S10"/>
    <property type="match status" value="1"/>
</dbReference>
<dbReference type="SUPFAM" id="SSF54999">
    <property type="entry name" value="Ribosomal protein S10"/>
    <property type="match status" value="1"/>
</dbReference>
<protein>
    <recommendedName>
        <fullName evidence="2">Small ribosomal subunit protein uS10m</fullName>
    </recommendedName>
    <alternativeName>
        <fullName>40S ribosomal protein S10, mitochondrial</fullName>
    </alternativeName>
</protein>
<proteinExistence type="evidence at protein level"/>